<comment type="subcellular location">
    <subcellularLocation>
        <location evidence="1">Cell inner membrane</location>
        <topology evidence="1">Multi-pass membrane protein</topology>
    </subcellularLocation>
</comment>
<comment type="similarity">
    <text evidence="1">Belongs to the UPF0266 family.</text>
</comment>
<name>YOBD_SALCH</name>
<gene>
    <name evidence="1" type="primary">yobD</name>
    <name type="ordered locus">SCH_1827</name>
</gene>
<protein>
    <recommendedName>
        <fullName evidence="1">UPF0266 membrane protein YobD</fullName>
    </recommendedName>
</protein>
<dbReference type="EMBL" id="AE017220">
    <property type="protein sequence ID" value="AAX65733.1"/>
    <property type="molecule type" value="Genomic_DNA"/>
</dbReference>
<dbReference type="RefSeq" id="WP_000156280.1">
    <property type="nucleotide sequence ID" value="NC_006905.1"/>
</dbReference>
<dbReference type="KEGG" id="sec:SCH_1827"/>
<dbReference type="HOGENOM" id="CLU_133645_0_0_6"/>
<dbReference type="Proteomes" id="UP000000538">
    <property type="component" value="Chromosome"/>
</dbReference>
<dbReference type="GO" id="GO:0005886">
    <property type="term" value="C:plasma membrane"/>
    <property type="evidence" value="ECO:0007669"/>
    <property type="project" value="UniProtKB-SubCell"/>
</dbReference>
<dbReference type="HAMAP" id="MF_01071">
    <property type="entry name" value="UPF0266"/>
    <property type="match status" value="1"/>
</dbReference>
<dbReference type="InterPro" id="IPR009328">
    <property type="entry name" value="DUF986"/>
</dbReference>
<dbReference type="NCBIfam" id="NF002791">
    <property type="entry name" value="PRK02913.1"/>
    <property type="match status" value="1"/>
</dbReference>
<dbReference type="Pfam" id="PF06173">
    <property type="entry name" value="DUF986"/>
    <property type="match status" value="1"/>
</dbReference>
<dbReference type="PIRSF" id="PIRSF020687">
    <property type="entry name" value="UCP020687"/>
    <property type="match status" value="1"/>
</dbReference>
<proteinExistence type="inferred from homology"/>
<accession>Q57NH8</accession>
<reference key="1">
    <citation type="journal article" date="2005" name="Nucleic Acids Res.">
        <title>The genome sequence of Salmonella enterica serovar Choleraesuis, a highly invasive and resistant zoonotic pathogen.</title>
        <authorList>
            <person name="Chiu C.-H."/>
            <person name="Tang P."/>
            <person name="Chu C."/>
            <person name="Hu S."/>
            <person name="Bao Q."/>
            <person name="Yu J."/>
            <person name="Chou Y.-Y."/>
            <person name="Wang H.-S."/>
            <person name="Lee Y.-S."/>
        </authorList>
    </citation>
    <scope>NUCLEOTIDE SEQUENCE [LARGE SCALE GENOMIC DNA]</scope>
    <source>
        <strain>SC-B67</strain>
    </source>
</reference>
<feature type="chain" id="PRO_1000064588" description="UPF0266 membrane protein YobD">
    <location>
        <begin position="1"/>
        <end position="152"/>
    </location>
</feature>
<feature type="transmembrane region" description="Helical" evidence="1">
    <location>
        <begin position="6"/>
        <end position="26"/>
    </location>
</feature>
<feature type="transmembrane region" description="Helical" evidence="1">
    <location>
        <begin position="45"/>
        <end position="65"/>
    </location>
</feature>
<feature type="transmembrane region" description="Helical" evidence="1">
    <location>
        <begin position="67"/>
        <end position="87"/>
    </location>
</feature>
<organism>
    <name type="scientific">Salmonella choleraesuis (strain SC-B67)</name>
    <dbReference type="NCBI Taxonomy" id="321314"/>
    <lineage>
        <taxon>Bacteria</taxon>
        <taxon>Pseudomonadati</taxon>
        <taxon>Pseudomonadota</taxon>
        <taxon>Gammaproteobacteria</taxon>
        <taxon>Enterobacterales</taxon>
        <taxon>Enterobacteriaceae</taxon>
        <taxon>Salmonella</taxon>
    </lineage>
</organism>
<keyword id="KW-0997">Cell inner membrane</keyword>
<keyword id="KW-1003">Cell membrane</keyword>
<keyword id="KW-0472">Membrane</keyword>
<keyword id="KW-0812">Transmembrane</keyword>
<keyword id="KW-1133">Transmembrane helix</keyword>
<evidence type="ECO:0000255" key="1">
    <source>
        <dbReference type="HAMAP-Rule" id="MF_01071"/>
    </source>
</evidence>
<sequence>MTITDLVLILFIAALLAYALYDQFIMPRRNGPTLLSIALLRRGRVDSVIFVGLVAILIYNNVTSHGAQMTTWLLSALALMGFYIFWIRTPRIIFKQRGFFFANVWIEYNRIKEMNLSEDGVLVMQLEQRRLLIRVRNIDDLEKIYKLLIENQ</sequence>